<accession>Q2PMN1</accession>
<dbReference type="EMBL" id="DQ317523">
    <property type="protein sequence ID" value="ABC25178.1"/>
    <property type="molecule type" value="Genomic_DNA"/>
</dbReference>
<dbReference type="RefSeq" id="YP_538819.1">
    <property type="nucleotide sequence ID" value="NC_007942.1"/>
</dbReference>
<dbReference type="SMR" id="Q2PMN1"/>
<dbReference type="FunCoup" id="Q2PMN1">
    <property type="interactions" value="19"/>
</dbReference>
<dbReference type="STRING" id="3847.Q2PMN1"/>
<dbReference type="PaxDb" id="3847-GLYMA03G15360.1"/>
<dbReference type="GeneID" id="3989362"/>
<dbReference type="KEGG" id="gmx:3989362"/>
<dbReference type="eggNOG" id="ENOG502QU0T">
    <property type="taxonomic scope" value="Eukaryota"/>
</dbReference>
<dbReference type="InParanoid" id="Q2PMN1"/>
<dbReference type="Proteomes" id="UP000008827">
    <property type="component" value="Chloroplast"/>
</dbReference>
<dbReference type="GO" id="GO:0009535">
    <property type="term" value="C:chloroplast thylakoid membrane"/>
    <property type="evidence" value="ECO:0007669"/>
    <property type="project" value="UniProtKB-SubCell"/>
</dbReference>
<dbReference type="GO" id="GO:0020037">
    <property type="term" value="F:heme binding"/>
    <property type="evidence" value="ECO:0007669"/>
    <property type="project" value="InterPro"/>
</dbReference>
<dbReference type="GO" id="GO:0017004">
    <property type="term" value="P:cytochrome complex assembly"/>
    <property type="evidence" value="ECO:0007669"/>
    <property type="project" value="UniProtKB-UniRule"/>
</dbReference>
<dbReference type="HAMAP" id="MF_01391">
    <property type="entry name" value="CytC_CcsA"/>
    <property type="match status" value="1"/>
</dbReference>
<dbReference type="InterPro" id="IPR002541">
    <property type="entry name" value="Cyt_c_assembly"/>
</dbReference>
<dbReference type="InterPro" id="IPR017562">
    <property type="entry name" value="Cyt_c_biogenesis_CcsA"/>
</dbReference>
<dbReference type="InterPro" id="IPR045062">
    <property type="entry name" value="Cyt_c_biogenesis_CcsA/CcmC"/>
</dbReference>
<dbReference type="NCBIfam" id="TIGR03144">
    <property type="entry name" value="cytochr_II_ccsB"/>
    <property type="match status" value="1"/>
</dbReference>
<dbReference type="PANTHER" id="PTHR30071:SF1">
    <property type="entry name" value="CYTOCHROME B_B6 PROTEIN-RELATED"/>
    <property type="match status" value="1"/>
</dbReference>
<dbReference type="PANTHER" id="PTHR30071">
    <property type="entry name" value="HEME EXPORTER PROTEIN C"/>
    <property type="match status" value="1"/>
</dbReference>
<dbReference type="Pfam" id="PF01578">
    <property type="entry name" value="Cytochrom_C_asm"/>
    <property type="match status" value="1"/>
</dbReference>
<protein>
    <recommendedName>
        <fullName evidence="1">Cytochrome c biogenesis protein CcsA</fullName>
    </recommendedName>
</protein>
<evidence type="ECO:0000255" key="1">
    <source>
        <dbReference type="HAMAP-Rule" id="MF_01391"/>
    </source>
</evidence>
<keyword id="KW-0150">Chloroplast</keyword>
<keyword id="KW-0201">Cytochrome c-type biogenesis</keyword>
<keyword id="KW-0472">Membrane</keyword>
<keyword id="KW-0934">Plastid</keyword>
<keyword id="KW-1185">Reference proteome</keyword>
<keyword id="KW-0793">Thylakoid</keyword>
<keyword id="KW-0812">Transmembrane</keyword>
<keyword id="KW-1133">Transmembrane helix</keyword>
<comment type="function">
    <text evidence="1">Required during biogenesis of c-type cytochromes (cytochrome c6 and cytochrome f) at the step of heme attachment.</text>
</comment>
<comment type="subunit">
    <text evidence="1">May interact with Ccs1.</text>
</comment>
<comment type="subcellular location">
    <subcellularLocation>
        <location evidence="1">Plastid</location>
        <location evidence="1">Chloroplast thylakoid membrane</location>
        <topology evidence="1">Multi-pass membrane protein</topology>
    </subcellularLocation>
</comment>
<comment type="similarity">
    <text evidence="1">Belongs to the CcmF/CycK/Ccl1/NrfE/CcsA family.</text>
</comment>
<proteinExistence type="inferred from homology"/>
<sequence length="325" mass="37382">MVFASLEHILTHISFSVVSILISIHLITLLFVKEIIGLSDSSKKGMIITFFCITGLLVTRWVFSGHLPFSDLYESLIFLSWTFSIFYMVPYFKKSKNYYLNTIITPSVIFTQGFATSGLLTKMHESLILVPALQSHWLMMHVSMMILGYATLLCGSLLSVAILVITFQELIQIIGKSKNFYFLNESFSFAEIKYMNMTDKNNVLQKTSFLSYRNYYRSQFLQQLDRWGYRTISLGFIFLTIGIISGAVWANEAWGSYWNWDPKETWAFITWTIFAIYLHTRKNKKLEDLNSSIVASIGFLIIWVCYLGINLLGIGLHSYGSFTPN</sequence>
<gene>
    <name evidence="1" type="primary">ccsA</name>
</gene>
<organism>
    <name type="scientific">Glycine max</name>
    <name type="common">Soybean</name>
    <name type="synonym">Glycine hispida</name>
    <dbReference type="NCBI Taxonomy" id="3847"/>
    <lineage>
        <taxon>Eukaryota</taxon>
        <taxon>Viridiplantae</taxon>
        <taxon>Streptophyta</taxon>
        <taxon>Embryophyta</taxon>
        <taxon>Tracheophyta</taxon>
        <taxon>Spermatophyta</taxon>
        <taxon>Magnoliopsida</taxon>
        <taxon>eudicotyledons</taxon>
        <taxon>Gunneridae</taxon>
        <taxon>Pentapetalae</taxon>
        <taxon>rosids</taxon>
        <taxon>fabids</taxon>
        <taxon>Fabales</taxon>
        <taxon>Fabaceae</taxon>
        <taxon>Papilionoideae</taxon>
        <taxon>50 kb inversion clade</taxon>
        <taxon>NPAAA clade</taxon>
        <taxon>indigoferoid/millettioid clade</taxon>
        <taxon>Phaseoleae</taxon>
        <taxon>Glycine</taxon>
        <taxon>Glycine subgen. Soja</taxon>
    </lineage>
</organism>
<geneLocation type="chloroplast"/>
<reference key="1">
    <citation type="journal article" date="2005" name="Plant Mol. Biol.">
        <title>Complete chloroplast genome sequence of Glycine max and comparative analyses with other legume genomes.</title>
        <authorList>
            <person name="Saski C."/>
            <person name="Lee S.-B."/>
            <person name="Daniell H."/>
            <person name="Wood T.C."/>
            <person name="Tomkins J."/>
            <person name="Kim H.-G."/>
            <person name="Jansen R.K."/>
        </authorList>
    </citation>
    <scope>NUCLEOTIDE SEQUENCE [LARGE SCALE GENOMIC DNA]</scope>
    <source>
        <strain>cv. PI 437654</strain>
    </source>
</reference>
<feature type="chain" id="PRO_0000277446" description="Cytochrome c biogenesis protein CcsA">
    <location>
        <begin position="1"/>
        <end position="325"/>
    </location>
</feature>
<feature type="transmembrane region" description="Helical" evidence="1">
    <location>
        <begin position="12"/>
        <end position="32"/>
    </location>
</feature>
<feature type="transmembrane region" description="Helical" evidence="1">
    <location>
        <begin position="45"/>
        <end position="65"/>
    </location>
</feature>
<feature type="transmembrane region" description="Helical" evidence="1">
    <location>
        <begin position="72"/>
        <end position="92"/>
    </location>
</feature>
<feature type="transmembrane region" description="Helical" evidence="1">
    <location>
        <begin position="100"/>
        <end position="120"/>
    </location>
</feature>
<feature type="transmembrane region" description="Helical" evidence="1">
    <location>
        <begin position="145"/>
        <end position="165"/>
    </location>
</feature>
<feature type="transmembrane region" description="Helical" evidence="1">
    <location>
        <begin position="231"/>
        <end position="251"/>
    </location>
</feature>
<feature type="transmembrane region" description="Helical" evidence="1">
    <location>
        <begin position="264"/>
        <end position="281"/>
    </location>
</feature>
<feature type="transmembrane region" description="Helical" evidence="1">
    <location>
        <begin position="293"/>
        <end position="313"/>
    </location>
</feature>
<name>CCSA_SOYBN</name>